<evidence type="ECO:0000255" key="1">
    <source>
        <dbReference type="HAMAP-Rule" id="MF_00607"/>
    </source>
</evidence>
<organism>
    <name type="scientific">Rhodopseudomonas palustris (strain BisB18)</name>
    <dbReference type="NCBI Taxonomy" id="316056"/>
    <lineage>
        <taxon>Bacteria</taxon>
        <taxon>Pseudomonadati</taxon>
        <taxon>Pseudomonadota</taxon>
        <taxon>Alphaproteobacteria</taxon>
        <taxon>Hyphomicrobiales</taxon>
        <taxon>Nitrobacteraceae</taxon>
        <taxon>Rhodopseudomonas</taxon>
    </lineage>
</organism>
<comment type="function">
    <text evidence="1">Specifically dimethylates two adjacent adenosines (A1518 and A1519) in the loop of a conserved hairpin near the 3'-end of 16S rRNA in the 30S particle. May play a critical role in biogenesis of 30S subunits.</text>
</comment>
<comment type="catalytic activity">
    <reaction evidence="1">
        <text>adenosine(1518)/adenosine(1519) in 16S rRNA + 4 S-adenosyl-L-methionine = N(6)-dimethyladenosine(1518)/N(6)-dimethyladenosine(1519) in 16S rRNA + 4 S-adenosyl-L-homocysteine + 4 H(+)</text>
        <dbReference type="Rhea" id="RHEA:19609"/>
        <dbReference type="Rhea" id="RHEA-COMP:10232"/>
        <dbReference type="Rhea" id="RHEA-COMP:10233"/>
        <dbReference type="ChEBI" id="CHEBI:15378"/>
        <dbReference type="ChEBI" id="CHEBI:57856"/>
        <dbReference type="ChEBI" id="CHEBI:59789"/>
        <dbReference type="ChEBI" id="CHEBI:74411"/>
        <dbReference type="ChEBI" id="CHEBI:74493"/>
        <dbReference type="EC" id="2.1.1.182"/>
    </reaction>
</comment>
<comment type="subcellular location">
    <subcellularLocation>
        <location evidence="1">Cytoplasm</location>
    </subcellularLocation>
</comment>
<comment type="similarity">
    <text evidence="1">Belongs to the class I-like SAM-binding methyltransferase superfamily. rRNA adenine N(6)-methyltransferase family. RsmA subfamily.</text>
</comment>
<gene>
    <name evidence="1" type="primary">rsmA</name>
    <name evidence="1" type="synonym">ksgA</name>
    <name type="ordered locus">RPC_2308</name>
</gene>
<accession>Q215S4</accession>
<proteinExistence type="inferred from homology"/>
<feature type="chain" id="PRO_0000257334" description="Ribosomal RNA small subunit methyltransferase A">
    <location>
        <begin position="1"/>
        <end position="286"/>
    </location>
</feature>
<feature type="binding site" evidence="1">
    <location>
        <position position="28"/>
    </location>
    <ligand>
        <name>S-adenosyl-L-methionine</name>
        <dbReference type="ChEBI" id="CHEBI:59789"/>
    </ligand>
</feature>
<feature type="binding site" evidence="1">
    <location>
        <position position="30"/>
    </location>
    <ligand>
        <name>S-adenosyl-L-methionine</name>
        <dbReference type="ChEBI" id="CHEBI:59789"/>
    </ligand>
</feature>
<feature type="binding site" evidence="1">
    <location>
        <position position="55"/>
    </location>
    <ligand>
        <name>S-adenosyl-L-methionine</name>
        <dbReference type="ChEBI" id="CHEBI:59789"/>
    </ligand>
</feature>
<feature type="binding site" evidence="1">
    <location>
        <position position="77"/>
    </location>
    <ligand>
        <name>S-adenosyl-L-methionine</name>
        <dbReference type="ChEBI" id="CHEBI:59789"/>
    </ligand>
</feature>
<feature type="binding site" evidence="1">
    <location>
        <position position="103"/>
    </location>
    <ligand>
        <name>S-adenosyl-L-methionine</name>
        <dbReference type="ChEBI" id="CHEBI:59789"/>
    </ligand>
</feature>
<feature type="binding site" evidence="1">
    <location>
        <position position="123"/>
    </location>
    <ligand>
        <name>S-adenosyl-L-methionine</name>
        <dbReference type="ChEBI" id="CHEBI:59789"/>
    </ligand>
</feature>
<protein>
    <recommendedName>
        <fullName evidence="1">Ribosomal RNA small subunit methyltransferase A</fullName>
        <ecNumber evidence="1">2.1.1.182</ecNumber>
    </recommendedName>
    <alternativeName>
        <fullName evidence="1">16S rRNA (adenine(1518)-N(6)/adenine(1519)-N(6))-dimethyltransferase</fullName>
    </alternativeName>
    <alternativeName>
        <fullName evidence="1">16S rRNA dimethyladenosine transferase</fullName>
    </alternativeName>
    <alternativeName>
        <fullName evidence="1">16S rRNA dimethylase</fullName>
    </alternativeName>
    <alternativeName>
        <fullName evidence="1">S-adenosylmethionine-6-N', N'-adenosyl(rRNA) dimethyltransferase</fullName>
    </alternativeName>
</protein>
<reference key="1">
    <citation type="submission" date="2006-03" db="EMBL/GenBank/DDBJ databases">
        <title>Complete sequence of Rhodopseudomonas palustris BisB18.</title>
        <authorList>
            <consortium name="US DOE Joint Genome Institute"/>
            <person name="Copeland A."/>
            <person name="Lucas S."/>
            <person name="Lapidus A."/>
            <person name="Barry K."/>
            <person name="Detter J.C."/>
            <person name="Glavina del Rio T."/>
            <person name="Hammon N."/>
            <person name="Israni S."/>
            <person name="Dalin E."/>
            <person name="Tice H."/>
            <person name="Pitluck S."/>
            <person name="Chain P."/>
            <person name="Malfatti S."/>
            <person name="Shin M."/>
            <person name="Vergez L."/>
            <person name="Schmutz J."/>
            <person name="Larimer F."/>
            <person name="Land M."/>
            <person name="Hauser L."/>
            <person name="Pelletier D.A."/>
            <person name="Kyrpides N."/>
            <person name="Anderson I."/>
            <person name="Oda Y."/>
            <person name="Harwood C.S."/>
            <person name="Richardson P."/>
        </authorList>
    </citation>
    <scope>NUCLEOTIDE SEQUENCE [LARGE SCALE GENOMIC DNA]</scope>
    <source>
        <strain>BisB18</strain>
    </source>
</reference>
<sequence>MSGIDDLPPLRDVIKRHDLSARKSLGQNFLLDLNLLTRIARAAGPLDGATVIEIGPGPGGLTRALLALGAAKVIAIERDERALGALQEIAAHYPGRLEIVCADATIYDPRPLLGGARAKIVANLPYNIATPLLIGWLSIEPWPPWYDTMVLMFQREVAERIVAREDDEAYGRLAVLANWRAETKLLFDISPAAFVPQPKVTSSVVRLVPRETPEPCDRRMLEQVAAAAFGQRRKMLRQSLKPLGVDPARLAAAAGVDPTRRAETIAVSGFVAMARELTDIRAIKSV</sequence>
<name>RSMA_RHOPB</name>
<dbReference type="EC" id="2.1.1.182" evidence="1"/>
<dbReference type="EMBL" id="CP000301">
    <property type="protein sequence ID" value="ABD87862.1"/>
    <property type="molecule type" value="Genomic_DNA"/>
</dbReference>
<dbReference type="SMR" id="Q215S4"/>
<dbReference type="STRING" id="316056.RPC_2308"/>
<dbReference type="KEGG" id="rpc:RPC_2308"/>
<dbReference type="eggNOG" id="COG0030">
    <property type="taxonomic scope" value="Bacteria"/>
</dbReference>
<dbReference type="HOGENOM" id="CLU_041220_0_1_5"/>
<dbReference type="OrthoDB" id="9814755at2"/>
<dbReference type="GO" id="GO:0005829">
    <property type="term" value="C:cytosol"/>
    <property type="evidence" value="ECO:0007669"/>
    <property type="project" value="TreeGrafter"/>
</dbReference>
<dbReference type="GO" id="GO:0052908">
    <property type="term" value="F:16S rRNA (adenine(1518)-N(6)/adenine(1519)-N(6))-dimethyltransferase activity"/>
    <property type="evidence" value="ECO:0007669"/>
    <property type="project" value="UniProtKB-EC"/>
</dbReference>
<dbReference type="GO" id="GO:0003723">
    <property type="term" value="F:RNA binding"/>
    <property type="evidence" value="ECO:0007669"/>
    <property type="project" value="UniProtKB-KW"/>
</dbReference>
<dbReference type="CDD" id="cd02440">
    <property type="entry name" value="AdoMet_MTases"/>
    <property type="match status" value="1"/>
</dbReference>
<dbReference type="FunFam" id="1.10.8.100:FF:000001">
    <property type="entry name" value="Ribosomal RNA small subunit methyltransferase A"/>
    <property type="match status" value="1"/>
</dbReference>
<dbReference type="Gene3D" id="1.10.8.100">
    <property type="entry name" value="Ribosomal RNA adenine dimethylase-like, domain 2"/>
    <property type="match status" value="1"/>
</dbReference>
<dbReference type="Gene3D" id="3.40.50.150">
    <property type="entry name" value="Vaccinia Virus protein VP39"/>
    <property type="match status" value="1"/>
</dbReference>
<dbReference type="HAMAP" id="MF_00607">
    <property type="entry name" value="16SrRNA_methyltr_A"/>
    <property type="match status" value="1"/>
</dbReference>
<dbReference type="InterPro" id="IPR001737">
    <property type="entry name" value="KsgA/Erm"/>
</dbReference>
<dbReference type="InterPro" id="IPR023165">
    <property type="entry name" value="rRNA_Ade_diMease-like_C"/>
</dbReference>
<dbReference type="InterPro" id="IPR020596">
    <property type="entry name" value="rRNA_Ade_Mease_Trfase_CS"/>
</dbReference>
<dbReference type="InterPro" id="IPR020598">
    <property type="entry name" value="rRNA_Ade_methylase_Trfase_N"/>
</dbReference>
<dbReference type="InterPro" id="IPR011530">
    <property type="entry name" value="rRNA_adenine_dimethylase"/>
</dbReference>
<dbReference type="InterPro" id="IPR029063">
    <property type="entry name" value="SAM-dependent_MTases_sf"/>
</dbReference>
<dbReference type="NCBIfam" id="TIGR00755">
    <property type="entry name" value="ksgA"/>
    <property type="match status" value="1"/>
</dbReference>
<dbReference type="PANTHER" id="PTHR11727">
    <property type="entry name" value="DIMETHYLADENOSINE TRANSFERASE"/>
    <property type="match status" value="1"/>
</dbReference>
<dbReference type="PANTHER" id="PTHR11727:SF7">
    <property type="entry name" value="DIMETHYLADENOSINE TRANSFERASE-RELATED"/>
    <property type="match status" value="1"/>
</dbReference>
<dbReference type="Pfam" id="PF00398">
    <property type="entry name" value="RrnaAD"/>
    <property type="match status" value="1"/>
</dbReference>
<dbReference type="SMART" id="SM00650">
    <property type="entry name" value="rADc"/>
    <property type="match status" value="1"/>
</dbReference>
<dbReference type="SUPFAM" id="SSF53335">
    <property type="entry name" value="S-adenosyl-L-methionine-dependent methyltransferases"/>
    <property type="match status" value="1"/>
</dbReference>
<dbReference type="PROSITE" id="PS01131">
    <property type="entry name" value="RRNA_A_DIMETH"/>
    <property type="match status" value="1"/>
</dbReference>
<dbReference type="PROSITE" id="PS51689">
    <property type="entry name" value="SAM_RNA_A_N6_MT"/>
    <property type="match status" value="1"/>
</dbReference>
<keyword id="KW-0963">Cytoplasm</keyword>
<keyword id="KW-0489">Methyltransferase</keyword>
<keyword id="KW-0694">RNA-binding</keyword>
<keyword id="KW-0698">rRNA processing</keyword>
<keyword id="KW-0949">S-adenosyl-L-methionine</keyword>
<keyword id="KW-0808">Transferase</keyword>